<evidence type="ECO:0000255" key="1">
    <source>
        <dbReference type="HAMAP-Rule" id="MF_01382"/>
    </source>
</evidence>
<protein>
    <recommendedName>
        <fullName evidence="1">Protein translocase subunit SecA 2</fullName>
        <ecNumber evidence="1">7.4.2.8</ecNumber>
    </recommendedName>
</protein>
<gene>
    <name evidence="1" type="primary">secA2</name>
    <name type="ordered locus">MW2570</name>
</gene>
<keyword id="KW-0067">ATP-binding</keyword>
<keyword id="KW-1003">Cell membrane</keyword>
<keyword id="KW-0963">Cytoplasm</keyword>
<keyword id="KW-0472">Membrane</keyword>
<keyword id="KW-0547">Nucleotide-binding</keyword>
<keyword id="KW-0653">Protein transport</keyword>
<keyword id="KW-1278">Translocase</keyword>
<keyword id="KW-0811">Translocation</keyword>
<keyword id="KW-0813">Transport</keyword>
<comment type="function">
    <text evidence="1">Part of the Sec protein translocase complex. Interacts with the SecYEG preprotein conducting channel. Has a central role in coupling the hydrolysis of ATP to the transfer of proteins into and across the cell membrane, serving as an ATP-driven molecular motor driving the stepwise translocation of polypeptide chains across the membrane.</text>
</comment>
<comment type="catalytic activity">
    <reaction evidence="1">
        <text>ATP + H2O + cellular proteinSide 1 = ADP + phosphate + cellular proteinSide 2.</text>
        <dbReference type="EC" id="7.4.2.8"/>
    </reaction>
</comment>
<comment type="subunit">
    <text evidence="1">Monomer and homodimer. Part of the essential Sec protein translocation apparatus which comprises SecA, SecYEG and auxiliary proteins SecDF. Other proteins may also be involved.</text>
</comment>
<comment type="subcellular location">
    <subcellularLocation>
        <location evidence="1">Cell membrane</location>
        <topology evidence="1">Peripheral membrane protein</topology>
        <orientation evidence="1">Cytoplasmic side</orientation>
    </subcellularLocation>
    <subcellularLocation>
        <location evidence="1">Cytoplasm</location>
    </subcellularLocation>
    <text evidence="1">Distribution is 50-50.</text>
</comment>
<comment type="similarity">
    <text evidence="1">Belongs to the SecA family.</text>
</comment>
<organism>
    <name type="scientific">Staphylococcus aureus (strain MW2)</name>
    <dbReference type="NCBI Taxonomy" id="196620"/>
    <lineage>
        <taxon>Bacteria</taxon>
        <taxon>Bacillati</taxon>
        <taxon>Bacillota</taxon>
        <taxon>Bacilli</taxon>
        <taxon>Bacillales</taxon>
        <taxon>Staphylococcaceae</taxon>
        <taxon>Staphylococcus</taxon>
    </lineage>
</organism>
<accession>Q8NUJ8</accession>
<sequence>MKHKLDVTINELRLKSIRKIVKRINTWGDEVKSYSDDALKQKTIEFKERLASGVDTLDTLLPEAYAVAREASWRVLGMYPKEVQLIGAIVLHEGNIAEMQTGEGKTLTATMPLYLNALSGKGTYLITTNDYLAKRDFEEMQPLYEWLGLTASLGFVDIVDYEYQKGEKRNLYEHDIIYTTNGRLGFDYLIDNLADSAEGKFLPQLNYGIIDEVDSIILDAAQTPLVISGAPRLQSNLFHIVKEFVDTLIEDVHFKMKKTKKEIWLLNQGIEAAQSYFNVEDLYSEQAMVLVRNINLALRAQYLFESNVDYFVYNGDIVLIDRITGRMLPGTKLQAGLHQAIEAKEGMEVSTDKSVMATITFQNLFKLFESFSGMTATGKLGESEFFDLYSKIVVQVPTDKAIQRIDEPDKVFRSVDEKNIAMIHDIVELHETGRPVLLITRTAEAAEYFSKVLFQMDIPNNLLIAQNVAKEAQMIAEAGQIGSMTVATSMAGRGTDIKLGEGVEALGGLAVIIHEHMENSRVDRQLRGRSGRQGDPGSSCIYISLDDYLVKRWSDSNLAENNQLYSLDAQRLSQSNLFNRKVKQIVVKAQRISEEQGVKAREMANEFEKSISIQRDLVYEERNRVLEIDDAENQDFKALAKDVFEMFVNEEKVLTKSRVVEYIYQNLSFQFNKDVACVNFKDKQAVVTFLLEQFEKQLALNRKNMQSAYYYNIFVQKVFLKAIDSCWLEQVDYLQQLKASVNQRQNGQRNAIFEYHRVALDSFEVMTRNIKKRMVKNICQSMITFDKEGMPVIHFP</sequence>
<dbReference type="EC" id="7.4.2.8" evidence="1"/>
<dbReference type="EMBL" id="BA000033">
    <property type="protein sequence ID" value="BAB96435.1"/>
    <property type="molecule type" value="Genomic_DNA"/>
</dbReference>
<dbReference type="RefSeq" id="WP_000680932.1">
    <property type="nucleotide sequence ID" value="NC_003923.1"/>
</dbReference>
<dbReference type="SMR" id="Q8NUJ8"/>
<dbReference type="KEGG" id="sam:MW2570"/>
<dbReference type="HOGENOM" id="CLU_005314_3_2_9"/>
<dbReference type="GO" id="GO:0031522">
    <property type="term" value="C:cell envelope Sec protein transport complex"/>
    <property type="evidence" value="ECO:0007669"/>
    <property type="project" value="TreeGrafter"/>
</dbReference>
<dbReference type="GO" id="GO:0005829">
    <property type="term" value="C:cytosol"/>
    <property type="evidence" value="ECO:0007669"/>
    <property type="project" value="TreeGrafter"/>
</dbReference>
<dbReference type="GO" id="GO:0005886">
    <property type="term" value="C:plasma membrane"/>
    <property type="evidence" value="ECO:0007669"/>
    <property type="project" value="UniProtKB-SubCell"/>
</dbReference>
<dbReference type="GO" id="GO:0005524">
    <property type="term" value="F:ATP binding"/>
    <property type="evidence" value="ECO:0007669"/>
    <property type="project" value="UniProtKB-UniRule"/>
</dbReference>
<dbReference type="GO" id="GO:0008564">
    <property type="term" value="F:protein-exporting ATPase activity"/>
    <property type="evidence" value="ECO:0007669"/>
    <property type="project" value="UniProtKB-EC"/>
</dbReference>
<dbReference type="GO" id="GO:0065002">
    <property type="term" value="P:intracellular protein transmembrane transport"/>
    <property type="evidence" value="ECO:0007669"/>
    <property type="project" value="UniProtKB-UniRule"/>
</dbReference>
<dbReference type="GO" id="GO:0017038">
    <property type="term" value="P:protein import"/>
    <property type="evidence" value="ECO:0007669"/>
    <property type="project" value="InterPro"/>
</dbReference>
<dbReference type="GO" id="GO:0006605">
    <property type="term" value="P:protein targeting"/>
    <property type="evidence" value="ECO:0007669"/>
    <property type="project" value="UniProtKB-UniRule"/>
</dbReference>
<dbReference type="GO" id="GO:0043952">
    <property type="term" value="P:protein transport by the Sec complex"/>
    <property type="evidence" value="ECO:0007669"/>
    <property type="project" value="TreeGrafter"/>
</dbReference>
<dbReference type="CDD" id="cd17928">
    <property type="entry name" value="DEXDc_SecA"/>
    <property type="match status" value="1"/>
</dbReference>
<dbReference type="CDD" id="cd18803">
    <property type="entry name" value="SF2_C_secA"/>
    <property type="match status" value="1"/>
</dbReference>
<dbReference type="FunFam" id="3.40.50.300:FF:000429">
    <property type="entry name" value="Preprotein translocase subunit SecA"/>
    <property type="match status" value="1"/>
</dbReference>
<dbReference type="FunFam" id="3.40.50.300:FF:001575">
    <property type="entry name" value="Protein translocase subunit SecA 2"/>
    <property type="match status" value="1"/>
</dbReference>
<dbReference type="Gene3D" id="1.10.3060.10">
    <property type="entry name" value="Helical scaffold and wing domains of SecA"/>
    <property type="match status" value="1"/>
</dbReference>
<dbReference type="Gene3D" id="3.40.50.300">
    <property type="entry name" value="P-loop containing nucleotide triphosphate hydrolases"/>
    <property type="match status" value="2"/>
</dbReference>
<dbReference type="Gene3D" id="3.90.1440.10">
    <property type="entry name" value="SecA, preprotein cross-linking domain"/>
    <property type="match status" value="1"/>
</dbReference>
<dbReference type="HAMAP" id="MF_01382">
    <property type="entry name" value="SecA"/>
    <property type="match status" value="1"/>
</dbReference>
<dbReference type="InterPro" id="IPR014001">
    <property type="entry name" value="Helicase_ATP-bd"/>
</dbReference>
<dbReference type="InterPro" id="IPR001650">
    <property type="entry name" value="Helicase_C-like"/>
</dbReference>
<dbReference type="InterPro" id="IPR027417">
    <property type="entry name" value="P-loop_NTPase"/>
</dbReference>
<dbReference type="InterPro" id="IPR000185">
    <property type="entry name" value="SecA"/>
</dbReference>
<dbReference type="InterPro" id="IPR022490">
    <property type="entry name" value="SecA2"/>
</dbReference>
<dbReference type="InterPro" id="IPR011115">
    <property type="entry name" value="SecA_DEAD"/>
</dbReference>
<dbReference type="InterPro" id="IPR014018">
    <property type="entry name" value="SecA_motor_DEAD"/>
</dbReference>
<dbReference type="InterPro" id="IPR011130">
    <property type="entry name" value="SecA_preprotein_X-link_dom"/>
</dbReference>
<dbReference type="InterPro" id="IPR044722">
    <property type="entry name" value="SecA_SF2_C"/>
</dbReference>
<dbReference type="InterPro" id="IPR011116">
    <property type="entry name" value="SecA_Wing/Scaffold"/>
</dbReference>
<dbReference type="InterPro" id="IPR036266">
    <property type="entry name" value="SecA_Wing/Scaffold_sf"/>
</dbReference>
<dbReference type="InterPro" id="IPR036670">
    <property type="entry name" value="SecA_X-link_sf"/>
</dbReference>
<dbReference type="NCBIfam" id="NF006630">
    <property type="entry name" value="PRK09200.1"/>
    <property type="match status" value="1"/>
</dbReference>
<dbReference type="NCBIfam" id="TIGR03714">
    <property type="entry name" value="secA2"/>
    <property type="match status" value="1"/>
</dbReference>
<dbReference type="PANTHER" id="PTHR30612:SF0">
    <property type="entry name" value="CHLOROPLAST PROTEIN-TRANSPORTING ATPASE"/>
    <property type="match status" value="1"/>
</dbReference>
<dbReference type="PANTHER" id="PTHR30612">
    <property type="entry name" value="SECA INNER MEMBRANE COMPONENT OF SEC PROTEIN SECRETION SYSTEM"/>
    <property type="match status" value="1"/>
</dbReference>
<dbReference type="Pfam" id="PF21090">
    <property type="entry name" value="P-loop_SecA"/>
    <property type="match status" value="1"/>
</dbReference>
<dbReference type="Pfam" id="PF07517">
    <property type="entry name" value="SecA_DEAD"/>
    <property type="match status" value="1"/>
</dbReference>
<dbReference type="Pfam" id="PF01043">
    <property type="entry name" value="SecA_PP_bind"/>
    <property type="match status" value="1"/>
</dbReference>
<dbReference type="Pfam" id="PF07516">
    <property type="entry name" value="SecA_SW"/>
    <property type="match status" value="1"/>
</dbReference>
<dbReference type="PRINTS" id="PR00906">
    <property type="entry name" value="SECA"/>
</dbReference>
<dbReference type="SMART" id="SM00957">
    <property type="entry name" value="SecA_DEAD"/>
    <property type="match status" value="1"/>
</dbReference>
<dbReference type="SMART" id="SM00958">
    <property type="entry name" value="SecA_PP_bind"/>
    <property type="match status" value="1"/>
</dbReference>
<dbReference type="SUPFAM" id="SSF81886">
    <property type="entry name" value="Helical scaffold and wing domains of SecA"/>
    <property type="match status" value="1"/>
</dbReference>
<dbReference type="SUPFAM" id="SSF52540">
    <property type="entry name" value="P-loop containing nucleoside triphosphate hydrolases"/>
    <property type="match status" value="2"/>
</dbReference>
<dbReference type="SUPFAM" id="SSF81767">
    <property type="entry name" value="Pre-protein crosslinking domain of SecA"/>
    <property type="match status" value="1"/>
</dbReference>
<dbReference type="PROSITE" id="PS51196">
    <property type="entry name" value="SECA_MOTOR_DEAD"/>
    <property type="match status" value="1"/>
</dbReference>
<proteinExistence type="inferred from homology"/>
<reference key="1">
    <citation type="journal article" date="2002" name="Lancet">
        <title>Genome and virulence determinants of high virulence community-acquired MRSA.</title>
        <authorList>
            <person name="Baba T."/>
            <person name="Takeuchi F."/>
            <person name="Kuroda M."/>
            <person name="Yuzawa H."/>
            <person name="Aoki K."/>
            <person name="Oguchi A."/>
            <person name="Nagai Y."/>
            <person name="Iwama N."/>
            <person name="Asano K."/>
            <person name="Naimi T."/>
            <person name="Kuroda H."/>
            <person name="Cui L."/>
            <person name="Yamamoto K."/>
            <person name="Hiramatsu K."/>
        </authorList>
    </citation>
    <scope>NUCLEOTIDE SEQUENCE [LARGE SCALE GENOMIC DNA]</scope>
    <source>
        <strain>MW2</strain>
    </source>
</reference>
<feature type="chain" id="PRO_0000318428" description="Protein translocase subunit SecA 2">
    <location>
        <begin position="1"/>
        <end position="796"/>
    </location>
</feature>
<feature type="binding site" evidence="1">
    <location>
        <position position="84"/>
    </location>
    <ligand>
        <name>ATP</name>
        <dbReference type="ChEBI" id="CHEBI:30616"/>
    </ligand>
</feature>
<feature type="binding site" evidence="1">
    <location>
        <begin position="102"/>
        <end position="106"/>
    </location>
    <ligand>
        <name>ATP</name>
        <dbReference type="ChEBI" id="CHEBI:30616"/>
    </ligand>
</feature>
<feature type="binding site" evidence="1">
    <location>
        <position position="496"/>
    </location>
    <ligand>
        <name>ATP</name>
        <dbReference type="ChEBI" id="CHEBI:30616"/>
    </ligand>
</feature>
<name>SECA2_STAAW</name>